<name>SYDND_HERA2</name>
<dbReference type="EC" id="6.1.1.23" evidence="1"/>
<dbReference type="EMBL" id="CP000875">
    <property type="protein sequence ID" value="ABX04055.1"/>
    <property type="molecule type" value="Genomic_DNA"/>
</dbReference>
<dbReference type="SMR" id="A9B392"/>
<dbReference type="FunCoup" id="A9B392">
    <property type="interactions" value="517"/>
</dbReference>
<dbReference type="STRING" id="316274.Haur_1411"/>
<dbReference type="KEGG" id="hau:Haur_1411"/>
<dbReference type="eggNOG" id="COG0173">
    <property type="taxonomic scope" value="Bacteria"/>
</dbReference>
<dbReference type="HOGENOM" id="CLU_014330_3_2_0"/>
<dbReference type="InParanoid" id="A9B392"/>
<dbReference type="Proteomes" id="UP000000787">
    <property type="component" value="Chromosome"/>
</dbReference>
<dbReference type="GO" id="GO:0005737">
    <property type="term" value="C:cytoplasm"/>
    <property type="evidence" value="ECO:0007669"/>
    <property type="project" value="UniProtKB-SubCell"/>
</dbReference>
<dbReference type="GO" id="GO:0004815">
    <property type="term" value="F:aspartate-tRNA ligase activity"/>
    <property type="evidence" value="ECO:0007669"/>
    <property type="project" value="UniProtKB-UniRule"/>
</dbReference>
<dbReference type="GO" id="GO:0050560">
    <property type="term" value="F:aspartate-tRNA(Asn) ligase activity"/>
    <property type="evidence" value="ECO:0007669"/>
    <property type="project" value="UniProtKB-EC"/>
</dbReference>
<dbReference type="GO" id="GO:0005524">
    <property type="term" value="F:ATP binding"/>
    <property type="evidence" value="ECO:0007669"/>
    <property type="project" value="UniProtKB-UniRule"/>
</dbReference>
<dbReference type="GO" id="GO:0003676">
    <property type="term" value="F:nucleic acid binding"/>
    <property type="evidence" value="ECO:0007669"/>
    <property type="project" value="InterPro"/>
</dbReference>
<dbReference type="GO" id="GO:0006422">
    <property type="term" value="P:aspartyl-tRNA aminoacylation"/>
    <property type="evidence" value="ECO:0007669"/>
    <property type="project" value="UniProtKB-UniRule"/>
</dbReference>
<dbReference type="CDD" id="cd00777">
    <property type="entry name" value="AspRS_core"/>
    <property type="match status" value="1"/>
</dbReference>
<dbReference type="CDD" id="cd04317">
    <property type="entry name" value="EcAspRS_like_N"/>
    <property type="match status" value="1"/>
</dbReference>
<dbReference type="Gene3D" id="3.30.930.10">
    <property type="entry name" value="Bira Bifunctional Protein, Domain 2"/>
    <property type="match status" value="1"/>
</dbReference>
<dbReference type="Gene3D" id="3.30.1360.30">
    <property type="entry name" value="GAD-like domain"/>
    <property type="match status" value="1"/>
</dbReference>
<dbReference type="Gene3D" id="2.40.50.140">
    <property type="entry name" value="Nucleic acid-binding proteins"/>
    <property type="match status" value="1"/>
</dbReference>
<dbReference type="HAMAP" id="MF_00044">
    <property type="entry name" value="Asp_tRNA_synth_type1"/>
    <property type="match status" value="1"/>
</dbReference>
<dbReference type="InterPro" id="IPR004364">
    <property type="entry name" value="Aa-tRNA-synt_II"/>
</dbReference>
<dbReference type="InterPro" id="IPR006195">
    <property type="entry name" value="aa-tRNA-synth_II"/>
</dbReference>
<dbReference type="InterPro" id="IPR045864">
    <property type="entry name" value="aa-tRNA-synth_II/BPL/LPL"/>
</dbReference>
<dbReference type="InterPro" id="IPR004524">
    <property type="entry name" value="Asp-tRNA-ligase_1"/>
</dbReference>
<dbReference type="InterPro" id="IPR047089">
    <property type="entry name" value="Asp-tRNA-ligase_1_N"/>
</dbReference>
<dbReference type="InterPro" id="IPR002312">
    <property type="entry name" value="Asp/Asn-tRNA-synth_IIb"/>
</dbReference>
<dbReference type="InterPro" id="IPR047090">
    <property type="entry name" value="AspRS_core"/>
</dbReference>
<dbReference type="InterPro" id="IPR004115">
    <property type="entry name" value="GAD-like_sf"/>
</dbReference>
<dbReference type="InterPro" id="IPR029351">
    <property type="entry name" value="GAD_dom"/>
</dbReference>
<dbReference type="InterPro" id="IPR012340">
    <property type="entry name" value="NA-bd_OB-fold"/>
</dbReference>
<dbReference type="InterPro" id="IPR004365">
    <property type="entry name" value="NA-bd_OB_tRNA"/>
</dbReference>
<dbReference type="NCBIfam" id="TIGR00459">
    <property type="entry name" value="aspS_bact"/>
    <property type="match status" value="1"/>
</dbReference>
<dbReference type="NCBIfam" id="NF001750">
    <property type="entry name" value="PRK00476.1"/>
    <property type="match status" value="1"/>
</dbReference>
<dbReference type="PANTHER" id="PTHR22594:SF5">
    <property type="entry name" value="ASPARTATE--TRNA LIGASE, MITOCHONDRIAL"/>
    <property type="match status" value="1"/>
</dbReference>
<dbReference type="PANTHER" id="PTHR22594">
    <property type="entry name" value="ASPARTYL/LYSYL-TRNA SYNTHETASE"/>
    <property type="match status" value="1"/>
</dbReference>
<dbReference type="Pfam" id="PF02938">
    <property type="entry name" value="GAD"/>
    <property type="match status" value="1"/>
</dbReference>
<dbReference type="Pfam" id="PF00152">
    <property type="entry name" value="tRNA-synt_2"/>
    <property type="match status" value="1"/>
</dbReference>
<dbReference type="Pfam" id="PF01336">
    <property type="entry name" value="tRNA_anti-codon"/>
    <property type="match status" value="1"/>
</dbReference>
<dbReference type="PRINTS" id="PR01042">
    <property type="entry name" value="TRNASYNTHASP"/>
</dbReference>
<dbReference type="SUPFAM" id="SSF55681">
    <property type="entry name" value="Class II aaRS and biotin synthetases"/>
    <property type="match status" value="1"/>
</dbReference>
<dbReference type="SUPFAM" id="SSF55261">
    <property type="entry name" value="GAD domain-like"/>
    <property type="match status" value="1"/>
</dbReference>
<dbReference type="SUPFAM" id="SSF50249">
    <property type="entry name" value="Nucleic acid-binding proteins"/>
    <property type="match status" value="1"/>
</dbReference>
<dbReference type="PROSITE" id="PS50862">
    <property type="entry name" value="AA_TRNA_LIGASE_II"/>
    <property type="match status" value="1"/>
</dbReference>
<comment type="function">
    <text evidence="1">Aspartyl-tRNA synthetase with relaxed tRNA specificity since it is able to aspartylate not only its cognate tRNA(Asp) but also tRNA(Asn). Reaction proceeds in two steps: L-aspartate is first activated by ATP to form Asp-AMP and then transferred to the acceptor end of tRNA(Asp/Asn).</text>
</comment>
<comment type="catalytic activity">
    <reaction evidence="1">
        <text>tRNA(Asx) + L-aspartate + ATP = L-aspartyl-tRNA(Asx) + AMP + diphosphate</text>
        <dbReference type="Rhea" id="RHEA:18349"/>
        <dbReference type="Rhea" id="RHEA-COMP:9710"/>
        <dbReference type="Rhea" id="RHEA-COMP:9711"/>
        <dbReference type="ChEBI" id="CHEBI:29991"/>
        <dbReference type="ChEBI" id="CHEBI:30616"/>
        <dbReference type="ChEBI" id="CHEBI:33019"/>
        <dbReference type="ChEBI" id="CHEBI:78442"/>
        <dbReference type="ChEBI" id="CHEBI:78516"/>
        <dbReference type="ChEBI" id="CHEBI:456215"/>
        <dbReference type="EC" id="6.1.1.23"/>
    </reaction>
</comment>
<comment type="subunit">
    <text evidence="1">Homodimer.</text>
</comment>
<comment type="subcellular location">
    <subcellularLocation>
        <location evidence="1">Cytoplasm</location>
    </subcellularLocation>
</comment>
<comment type="similarity">
    <text evidence="1">Belongs to the class-II aminoacyl-tRNA synthetase family. Type 1 subfamily.</text>
</comment>
<keyword id="KW-0030">Aminoacyl-tRNA synthetase</keyword>
<keyword id="KW-0067">ATP-binding</keyword>
<keyword id="KW-0963">Cytoplasm</keyword>
<keyword id="KW-0436">Ligase</keyword>
<keyword id="KW-0547">Nucleotide-binding</keyword>
<keyword id="KW-0648">Protein biosynthesis</keyword>
<evidence type="ECO:0000255" key="1">
    <source>
        <dbReference type="HAMAP-Rule" id="MF_00044"/>
    </source>
</evidence>
<organism>
    <name type="scientific">Herpetosiphon aurantiacus (strain ATCC 23779 / DSM 785 / 114-95)</name>
    <dbReference type="NCBI Taxonomy" id="316274"/>
    <lineage>
        <taxon>Bacteria</taxon>
        <taxon>Bacillati</taxon>
        <taxon>Chloroflexota</taxon>
        <taxon>Chloroflexia</taxon>
        <taxon>Herpetosiphonales</taxon>
        <taxon>Herpetosiphonaceae</taxon>
        <taxon>Herpetosiphon</taxon>
    </lineage>
</organism>
<gene>
    <name evidence="1" type="primary">aspS</name>
    <name type="ordered locus">Haur_1411</name>
</gene>
<reference key="1">
    <citation type="journal article" date="2011" name="Stand. Genomic Sci.">
        <title>Complete genome sequence of the filamentous gliding predatory bacterium Herpetosiphon aurantiacus type strain (114-95(T)).</title>
        <authorList>
            <person name="Kiss H."/>
            <person name="Nett M."/>
            <person name="Domin N."/>
            <person name="Martin K."/>
            <person name="Maresca J.A."/>
            <person name="Copeland A."/>
            <person name="Lapidus A."/>
            <person name="Lucas S."/>
            <person name="Berry K.W."/>
            <person name="Glavina Del Rio T."/>
            <person name="Dalin E."/>
            <person name="Tice H."/>
            <person name="Pitluck S."/>
            <person name="Richardson P."/>
            <person name="Bruce D."/>
            <person name="Goodwin L."/>
            <person name="Han C."/>
            <person name="Detter J.C."/>
            <person name="Schmutz J."/>
            <person name="Brettin T."/>
            <person name="Land M."/>
            <person name="Hauser L."/>
            <person name="Kyrpides N.C."/>
            <person name="Ivanova N."/>
            <person name="Goeker M."/>
            <person name="Woyke T."/>
            <person name="Klenk H.P."/>
            <person name="Bryant D.A."/>
        </authorList>
    </citation>
    <scope>NUCLEOTIDE SEQUENCE [LARGE SCALE GENOMIC DNA]</scope>
    <source>
        <strain>ATCC 23779 / DSM 785 / 114-95</strain>
    </source>
</reference>
<protein>
    <recommendedName>
        <fullName evidence="1">Aspartate--tRNA(Asp/Asn) ligase</fullName>
        <ecNumber evidence="1">6.1.1.23</ecNumber>
    </recommendedName>
    <alternativeName>
        <fullName evidence="1">Aspartyl-tRNA synthetase</fullName>
        <shortName evidence="1">AspRS</shortName>
    </alternativeName>
    <alternativeName>
        <fullName evidence="1">Non-discriminating aspartyl-tRNA synthetase</fullName>
        <shortName evidence="1">ND-AspRS</shortName>
    </alternativeName>
</protein>
<proteinExistence type="inferred from homology"/>
<sequence>MLRTHTCGELRRDHIDQTVTLAGWVHRRRDHGTVLFLDLRDRYGLTQVIVDPSSNPEARAMLDSIKNEYVIQVTGRVRSRLEGAENANLATGAIELEVQSAKILNTAKTPPILVNRDGGEDEALRLKYRYIELRRERQQHILGLRHRTIKFMRDWMDREGFWEIETPILMKSTPEGARDYLVPSRLHPGEFYALPQSPQQLKQLLMVSGIDKYFQIARCMRDEDLRADRQPEFTQLDIEMSFVEQDDVLDVVERLMTELVANVTPHKRLVSPFPRLTYADAIEYYGSDKPDLRYDLKFVNVGEIVKDSQFGVFTGALSSGGKVQAIRLPGCGSYSRKQIDDLQEVAKIGGAKGMAWMAIEADGSVRSPIAKFFEQAQLDQLKSATAAEAGDLIVYVADKPAVVAASLDKVRREMAKRLDLADKDLMHFAWVIDFPMFEYNAESGEWDAAHHPFCMVNPADVEKMQRGEFEGVRAASYDLVCNGYELASGSIRIHDRSIQQYIFDRLPYSPEEIQKRFGHMLEAFEYGAPPHGGMAPGIDRLVMLLADTDNIRDVIAFPKTQRAEDLMMNAPSSVDAKQLRELGLRLADGVEPRG</sequence>
<feature type="chain" id="PRO_1000091001" description="Aspartate--tRNA(Asp/Asn) ligase">
    <location>
        <begin position="1"/>
        <end position="594"/>
    </location>
</feature>
<feature type="region of interest" description="Aspartate" evidence="1">
    <location>
        <begin position="199"/>
        <end position="202"/>
    </location>
</feature>
<feature type="binding site" evidence="1">
    <location>
        <position position="175"/>
    </location>
    <ligand>
        <name>L-aspartate</name>
        <dbReference type="ChEBI" id="CHEBI:29991"/>
    </ligand>
</feature>
<feature type="binding site" evidence="1">
    <location>
        <begin position="221"/>
        <end position="223"/>
    </location>
    <ligand>
        <name>ATP</name>
        <dbReference type="ChEBI" id="CHEBI:30616"/>
    </ligand>
</feature>
<feature type="binding site" evidence="1">
    <location>
        <position position="221"/>
    </location>
    <ligand>
        <name>L-aspartate</name>
        <dbReference type="ChEBI" id="CHEBI:29991"/>
    </ligand>
</feature>
<feature type="binding site" evidence="1">
    <location>
        <position position="230"/>
    </location>
    <ligand>
        <name>ATP</name>
        <dbReference type="ChEBI" id="CHEBI:30616"/>
    </ligand>
</feature>
<feature type="binding site" evidence="1">
    <location>
        <position position="450"/>
    </location>
    <ligand>
        <name>L-aspartate</name>
        <dbReference type="ChEBI" id="CHEBI:29991"/>
    </ligand>
</feature>
<feature type="binding site" evidence="1">
    <location>
        <position position="485"/>
    </location>
    <ligand>
        <name>ATP</name>
        <dbReference type="ChEBI" id="CHEBI:30616"/>
    </ligand>
</feature>
<feature type="binding site" evidence="1">
    <location>
        <position position="492"/>
    </location>
    <ligand>
        <name>L-aspartate</name>
        <dbReference type="ChEBI" id="CHEBI:29991"/>
    </ligand>
</feature>
<feature type="binding site" evidence="1">
    <location>
        <begin position="537"/>
        <end position="540"/>
    </location>
    <ligand>
        <name>ATP</name>
        <dbReference type="ChEBI" id="CHEBI:30616"/>
    </ligand>
</feature>
<feature type="site" description="Important for tRNA non-discrimination" evidence="1">
    <location>
        <position position="31"/>
    </location>
</feature>
<feature type="site" description="Important for tRNA non-discrimination" evidence="1">
    <location>
        <position position="83"/>
    </location>
</feature>
<accession>A9B392</accession>